<accession>Q819V4</accession>
<name>PLSX_BACCR</name>
<dbReference type="EC" id="2.3.1.274" evidence="1"/>
<dbReference type="EMBL" id="AE016877">
    <property type="protein sequence ID" value="AAP10773.1"/>
    <property type="molecule type" value="Genomic_DNA"/>
</dbReference>
<dbReference type="RefSeq" id="NP_833572.1">
    <property type="nucleotide sequence ID" value="NC_004722.1"/>
</dbReference>
<dbReference type="RefSeq" id="WP_000684092.1">
    <property type="nucleotide sequence ID" value="NC_004722.1"/>
</dbReference>
<dbReference type="SMR" id="Q819V4"/>
<dbReference type="STRING" id="226900.BC_3851"/>
<dbReference type="KEGG" id="bce:BC3851"/>
<dbReference type="PATRIC" id="fig|226900.8.peg.3970"/>
<dbReference type="HOGENOM" id="CLU_039379_1_1_9"/>
<dbReference type="OrthoDB" id="9806408at2"/>
<dbReference type="UniPathway" id="UPA00085"/>
<dbReference type="Proteomes" id="UP000001417">
    <property type="component" value="Chromosome"/>
</dbReference>
<dbReference type="GO" id="GO:0005737">
    <property type="term" value="C:cytoplasm"/>
    <property type="evidence" value="ECO:0007669"/>
    <property type="project" value="UniProtKB-SubCell"/>
</dbReference>
<dbReference type="GO" id="GO:0043811">
    <property type="term" value="F:phosphate:acyl-[acyl carrier protein] acyltransferase activity"/>
    <property type="evidence" value="ECO:0007669"/>
    <property type="project" value="UniProtKB-UniRule"/>
</dbReference>
<dbReference type="GO" id="GO:0006633">
    <property type="term" value="P:fatty acid biosynthetic process"/>
    <property type="evidence" value="ECO:0007669"/>
    <property type="project" value="UniProtKB-UniRule"/>
</dbReference>
<dbReference type="GO" id="GO:0008654">
    <property type="term" value="P:phospholipid biosynthetic process"/>
    <property type="evidence" value="ECO:0007669"/>
    <property type="project" value="UniProtKB-KW"/>
</dbReference>
<dbReference type="Gene3D" id="3.40.718.10">
    <property type="entry name" value="Isopropylmalate Dehydrogenase"/>
    <property type="match status" value="1"/>
</dbReference>
<dbReference type="HAMAP" id="MF_00019">
    <property type="entry name" value="PlsX"/>
    <property type="match status" value="1"/>
</dbReference>
<dbReference type="InterPro" id="IPR003664">
    <property type="entry name" value="FA_synthesis"/>
</dbReference>
<dbReference type="InterPro" id="IPR012281">
    <property type="entry name" value="Phospholipid_synth_PlsX-like"/>
</dbReference>
<dbReference type="NCBIfam" id="TIGR00182">
    <property type="entry name" value="plsX"/>
    <property type="match status" value="1"/>
</dbReference>
<dbReference type="PANTHER" id="PTHR30100">
    <property type="entry name" value="FATTY ACID/PHOSPHOLIPID SYNTHESIS PROTEIN PLSX"/>
    <property type="match status" value="1"/>
</dbReference>
<dbReference type="PANTHER" id="PTHR30100:SF1">
    <property type="entry name" value="PHOSPHATE ACYLTRANSFERASE"/>
    <property type="match status" value="1"/>
</dbReference>
<dbReference type="Pfam" id="PF02504">
    <property type="entry name" value="FA_synthesis"/>
    <property type="match status" value="1"/>
</dbReference>
<dbReference type="PIRSF" id="PIRSF002465">
    <property type="entry name" value="Phsphlp_syn_PlsX"/>
    <property type="match status" value="1"/>
</dbReference>
<dbReference type="SUPFAM" id="SSF53659">
    <property type="entry name" value="Isocitrate/Isopropylmalate dehydrogenase-like"/>
    <property type="match status" value="1"/>
</dbReference>
<reference key="1">
    <citation type="journal article" date="2003" name="Nature">
        <title>Genome sequence of Bacillus cereus and comparative analysis with Bacillus anthracis.</title>
        <authorList>
            <person name="Ivanova N."/>
            <person name="Sorokin A."/>
            <person name="Anderson I."/>
            <person name="Galleron N."/>
            <person name="Candelon B."/>
            <person name="Kapatral V."/>
            <person name="Bhattacharyya A."/>
            <person name="Reznik G."/>
            <person name="Mikhailova N."/>
            <person name="Lapidus A."/>
            <person name="Chu L."/>
            <person name="Mazur M."/>
            <person name="Goltsman E."/>
            <person name="Larsen N."/>
            <person name="D'Souza M."/>
            <person name="Walunas T."/>
            <person name="Grechkin Y."/>
            <person name="Pusch G."/>
            <person name="Haselkorn R."/>
            <person name="Fonstein M."/>
            <person name="Ehrlich S.D."/>
            <person name="Overbeek R."/>
            <person name="Kyrpides N.C."/>
        </authorList>
    </citation>
    <scope>NUCLEOTIDE SEQUENCE [LARGE SCALE GENOMIC DNA]</scope>
    <source>
        <strain>ATCC 14579 / DSM 31 / CCUG 7414 / JCM 2152 / NBRC 15305 / NCIMB 9373 / NCTC 2599 / NRRL B-3711</strain>
    </source>
</reference>
<keyword id="KW-0963">Cytoplasm</keyword>
<keyword id="KW-0444">Lipid biosynthesis</keyword>
<keyword id="KW-0443">Lipid metabolism</keyword>
<keyword id="KW-0594">Phospholipid biosynthesis</keyword>
<keyword id="KW-1208">Phospholipid metabolism</keyword>
<keyword id="KW-1185">Reference proteome</keyword>
<keyword id="KW-0808">Transferase</keyword>
<gene>
    <name evidence="1" type="primary">plsX</name>
    <name type="ordered locus">BC_3851</name>
</gene>
<organism>
    <name type="scientific">Bacillus cereus (strain ATCC 14579 / DSM 31 / CCUG 7414 / JCM 2152 / NBRC 15305 / NCIMB 9373 / NCTC 2599 / NRRL B-3711)</name>
    <dbReference type="NCBI Taxonomy" id="226900"/>
    <lineage>
        <taxon>Bacteria</taxon>
        <taxon>Bacillati</taxon>
        <taxon>Bacillota</taxon>
        <taxon>Bacilli</taxon>
        <taxon>Bacillales</taxon>
        <taxon>Bacillaceae</taxon>
        <taxon>Bacillus</taxon>
        <taxon>Bacillus cereus group</taxon>
    </lineage>
</organism>
<proteinExistence type="inferred from homology"/>
<evidence type="ECO:0000255" key="1">
    <source>
        <dbReference type="HAMAP-Rule" id="MF_00019"/>
    </source>
</evidence>
<sequence length="330" mass="35392">MKIAIDAMGGDHAPKAVVLGAMKAIKEYSDLHITLVGKEEEIRQCLMSDERITILHTDEKIESTEEPVRAVRRKKQASMVLAAQQVKDGEADACISAGSTGALMAAGLFVVGRMEGIERPALSPTMPTVDGKGFVMLDVGANVDAKPIHLYQYAVMGSVYAEKVRGIENPRVGLLNVGTEDGKGNELSKQVFAMLKDAPINFVGNVESRDLLQGVADVVVCDGFTGNVALKSLEGTALALFSMLKEQLMSSFTSKLAAAVLKPKLMVLKDKMDYSEYGGAALFGLKAPVIKAHGSSNDQSIFSAIRQTREMVAKEVIPTISSVMEKESLQ</sequence>
<comment type="function">
    <text evidence="1">Catalyzes the reversible formation of acyl-phosphate (acyl-PO(4)) from acyl-[acyl-carrier-protein] (acyl-ACP). This enzyme utilizes acyl-ACP as fatty acyl donor, but not acyl-CoA.</text>
</comment>
<comment type="catalytic activity">
    <reaction evidence="1">
        <text>a fatty acyl-[ACP] + phosphate = an acyl phosphate + holo-[ACP]</text>
        <dbReference type="Rhea" id="RHEA:42292"/>
        <dbReference type="Rhea" id="RHEA-COMP:9685"/>
        <dbReference type="Rhea" id="RHEA-COMP:14125"/>
        <dbReference type="ChEBI" id="CHEBI:43474"/>
        <dbReference type="ChEBI" id="CHEBI:59918"/>
        <dbReference type="ChEBI" id="CHEBI:64479"/>
        <dbReference type="ChEBI" id="CHEBI:138651"/>
        <dbReference type="EC" id="2.3.1.274"/>
    </reaction>
</comment>
<comment type="pathway">
    <text evidence="1">Lipid metabolism; phospholipid metabolism.</text>
</comment>
<comment type="subunit">
    <text evidence="1">Homodimer. Probably interacts with PlsY.</text>
</comment>
<comment type="subcellular location">
    <subcellularLocation>
        <location evidence="1">Cytoplasm</location>
    </subcellularLocation>
    <text evidence="1">Associated with the membrane possibly through PlsY.</text>
</comment>
<comment type="similarity">
    <text evidence="1">Belongs to the PlsX family.</text>
</comment>
<feature type="chain" id="PRO_0000189841" description="Phosphate acyltransferase">
    <location>
        <begin position="1"/>
        <end position="330"/>
    </location>
</feature>
<protein>
    <recommendedName>
        <fullName evidence="1">Phosphate acyltransferase</fullName>
        <ecNumber evidence="1">2.3.1.274</ecNumber>
    </recommendedName>
    <alternativeName>
        <fullName evidence="1">Acyl-ACP phosphotransacylase</fullName>
    </alternativeName>
    <alternativeName>
        <fullName evidence="1">Acyl-[acyl-carrier-protein]--phosphate acyltransferase</fullName>
    </alternativeName>
    <alternativeName>
        <fullName evidence="1">Phosphate-acyl-ACP acyltransferase</fullName>
    </alternativeName>
</protein>